<comment type="function">
    <text evidence="1">Binds to actin and affects the structure of the cytoskeleton. At high concentrations, profilin prevents the polymerization of actin, whereas it enhances it at low concentrations (By similarity).</text>
</comment>
<comment type="subunit">
    <text evidence="1">Occurs in many kinds of cells as a complex with monomeric actin in a 1:1 ratio.</text>
</comment>
<comment type="subcellular location">
    <subcellularLocation>
        <location evidence="1">Cytoplasm</location>
        <location evidence="1">Cytoskeleton</location>
    </subcellularLocation>
</comment>
<comment type="PTM">
    <text evidence="1">Phosphorylated by MAP kinases.</text>
</comment>
<comment type="polymorphism">
    <text>Several isoforms of the allergen exist due to polymorphism.</text>
</comment>
<comment type="allergen">
    <text>Causes an allergic reaction in human.</text>
</comment>
<comment type="miscellaneous">
    <text evidence="3">The variability of the residues taking part of IgE-binding epitopes might be responsible of the difference in cross-reactivity among olive pollen cultivars, and between distantly related pollen species, leading to a variable range of allergy reactions among atopic patients.</text>
</comment>
<comment type="similarity">
    <text evidence="2">Belongs to the profilin family.</text>
</comment>
<protein>
    <recommendedName>
        <fullName>Profilin-8</fullName>
    </recommendedName>
    <alternativeName>
        <fullName>Pollen allergen Zea m 12</fullName>
    </alternativeName>
    <alternativeName>
        <fullName>Pollen profilin variant 3</fullName>
    </alternativeName>
    <allergenName>Zea m 12</allergenName>
</protein>
<name>PROF8_MAIZE</name>
<accession>A4KA57</accession>
<reference key="1">
    <citation type="journal article" date="2012" name="PLoS ONE">
        <title>Characterization of profilin polymorphism in pollen with a focus on multifunctionality.</title>
        <authorList>
            <person name="Jimenez-Lopez J.C."/>
            <person name="Morales S."/>
            <person name="Castro A.J."/>
            <person name="Volkmann D."/>
            <person name="Rodriguez-Garcia M.I."/>
            <person name="Alche Jde D."/>
        </authorList>
    </citation>
    <scope>NUCLEOTIDE SEQUENCE [MRNA]</scope>
    <scope>POLYMORPHISM</scope>
    <source>
        <strain>cv. Birko</strain>
    </source>
</reference>
<reference key="2">
    <citation type="journal article" date="2013" name="PLoS ONE">
        <title>Analysis of the effects of polymorphism on pollen profilin structural functionality and the generation of conformational, T- and B-cell epitopes.</title>
        <authorList>
            <person name="Jimenez-Lopez J.C."/>
            <person name="Rodriguez-Garcia M.I."/>
            <person name="Alche J.D."/>
        </authorList>
    </citation>
    <scope>3D-STRUCTURE MODELING</scope>
    <scope>DISULFIDE BOND</scope>
</reference>
<keyword id="KW-0009">Actin-binding</keyword>
<keyword id="KW-0020">Allergen</keyword>
<keyword id="KW-0963">Cytoplasm</keyword>
<keyword id="KW-0206">Cytoskeleton</keyword>
<keyword id="KW-1015">Disulfide bond</keyword>
<keyword id="KW-0597">Phosphoprotein</keyword>
<keyword id="KW-1185">Reference proteome</keyword>
<feature type="initiator methionine" description="Removed" evidence="1">
    <location>
        <position position="1"/>
    </location>
</feature>
<feature type="chain" id="PRO_0000425067" description="Profilin-8">
    <location>
        <begin position="2"/>
        <end position="131"/>
    </location>
</feature>
<feature type="short sequence motif" description="Involved in PIP2 interaction">
    <location>
        <begin position="81"/>
        <end position="97"/>
    </location>
</feature>
<feature type="modified residue" description="Phosphothreonine" evidence="1">
    <location>
        <position position="111"/>
    </location>
</feature>
<feature type="disulfide bond" evidence="3">
    <location>
        <begin position="13"/>
        <end position="115"/>
    </location>
</feature>
<proteinExistence type="evidence at protein level"/>
<dbReference type="EMBL" id="DQ663561">
    <property type="protein sequence ID" value="ABG81314.1"/>
    <property type="molecule type" value="mRNA"/>
</dbReference>
<dbReference type="SMR" id="A4KA57"/>
<dbReference type="STRING" id="4577.A4KA57"/>
<dbReference type="Allergome" id="682">
    <property type="allergen name" value="Zea m 12"/>
</dbReference>
<dbReference type="InParanoid" id="A4KA57"/>
<dbReference type="Proteomes" id="UP000007305">
    <property type="component" value="Unplaced"/>
</dbReference>
<dbReference type="ExpressionAtlas" id="A4KA57">
    <property type="expression patterns" value="baseline and differential"/>
</dbReference>
<dbReference type="GO" id="GO:0005938">
    <property type="term" value="C:cell cortex"/>
    <property type="evidence" value="ECO:0000318"/>
    <property type="project" value="GO_Central"/>
</dbReference>
<dbReference type="GO" id="GO:0005856">
    <property type="term" value="C:cytoskeleton"/>
    <property type="evidence" value="ECO:0007669"/>
    <property type="project" value="UniProtKB-SubCell"/>
</dbReference>
<dbReference type="GO" id="GO:0003785">
    <property type="term" value="F:actin monomer binding"/>
    <property type="evidence" value="ECO:0000318"/>
    <property type="project" value="GO_Central"/>
</dbReference>
<dbReference type="GO" id="GO:0070064">
    <property type="term" value="F:proline-rich region binding"/>
    <property type="evidence" value="ECO:0007669"/>
    <property type="project" value="UniProtKB-ARBA"/>
</dbReference>
<dbReference type="GO" id="GO:0007097">
    <property type="term" value="P:nuclear migration"/>
    <property type="evidence" value="ECO:0007669"/>
    <property type="project" value="UniProtKB-ARBA"/>
</dbReference>
<dbReference type="GO" id="GO:0032956">
    <property type="term" value="P:regulation of actin cytoskeleton organization"/>
    <property type="evidence" value="ECO:0007669"/>
    <property type="project" value="UniProtKB-ARBA"/>
</dbReference>
<dbReference type="CDD" id="cd00148">
    <property type="entry name" value="PROF"/>
    <property type="match status" value="1"/>
</dbReference>
<dbReference type="FunFam" id="3.30.450.30:FF:000001">
    <property type="entry name" value="Profilin"/>
    <property type="match status" value="1"/>
</dbReference>
<dbReference type="Gene3D" id="3.30.450.30">
    <property type="entry name" value="Dynein light chain 2a, cytoplasmic"/>
    <property type="match status" value="1"/>
</dbReference>
<dbReference type="InterPro" id="IPR048278">
    <property type="entry name" value="PFN"/>
</dbReference>
<dbReference type="InterPro" id="IPR005455">
    <property type="entry name" value="PFN_euk"/>
</dbReference>
<dbReference type="InterPro" id="IPR036140">
    <property type="entry name" value="PFN_sf"/>
</dbReference>
<dbReference type="InterPro" id="IPR027310">
    <property type="entry name" value="Profilin_CS"/>
</dbReference>
<dbReference type="PANTHER" id="PTHR11604">
    <property type="entry name" value="PROFILIN"/>
    <property type="match status" value="1"/>
</dbReference>
<dbReference type="PANTHER" id="PTHR11604:SF51">
    <property type="entry name" value="PROFILIN-A"/>
    <property type="match status" value="1"/>
</dbReference>
<dbReference type="Pfam" id="PF00235">
    <property type="entry name" value="Profilin"/>
    <property type="match status" value="1"/>
</dbReference>
<dbReference type="PRINTS" id="PR00392">
    <property type="entry name" value="PROFILIN"/>
</dbReference>
<dbReference type="PRINTS" id="PR01640">
    <property type="entry name" value="PROFILINPLNT"/>
</dbReference>
<dbReference type="SMART" id="SM00392">
    <property type="entry name" value="PROF"/>
    <property type="match status" value="1"/>
</dbReference>
<dbReference type="SUPFAM" id="SSF55770">
    <property type="entry name" value="Profilin (actin-binding protein)"/>
    <property type="match status" value="1"/>
</dbReference>
<dbReference type="PROSITE" id="PS00414">
    <property type="entry name" value="PROFILIN"/>
    <property type="match status" value="1"/>
</dbReference>
<organism>
    <name type="scientific">Zea mays</name>
    <name type="common">Maize</name>
    <dbReference type="NCBI Taxonomy" id="4577"/>
    <lineage>
        <taxon>Eukaryota</taxon>
        <taxon>Viridiplantae</taxon>
        <taxon>Streptophyta</taxon>
        <taxon>Embryophyta</taxon>
        <taxon>Tracheophyta</taxon>
        <taxon>Spermatophyta</taxon>
        <taxon>Magnoliopsida</taxon>
        <taxon>Liliopsida</taxon>
        <taxon>Poales</taxon>
        <taxon>Poaceae</taxon>
        <taxon>PACMAD clade</taxon>
        <taxon>Panicoideae</taxon>
        <taxon>Andropogonodae</taxon>
        <taxon>Andropogoneae</taxon>
        <taxon>Tripsacinae</taxon>
        <taxon>Zea</taxon>
    </lineage>
</organism>
<sequence length="131" mass="14149">MSWQAYVDEHLMCEIEGHHLTSAAIVGHDGAAWAQSTAFPEFKTEDMANIMKDFDEPGHLAPTGLFLGPTKYMVIQGEPGAVIRGKKGSGGITVKKTGQALVVGIYDEPMTPGQCNMVVERLGDYLLKQGL</sequence>
<evidence type="ECO:0000250" key="1"/>
<evidence type="ECO:0000305" key="2"/>
<evidence type="ECO:0000305" key="3">
    <source>
    </source>
</evidence>